<proteinExistence type="inferred from homology"/>
<evidence type="ECO:0000255" key="1">
    <source>
        <dbReference type="HAMAP-Rule" id="MF_00523"/>
    </source>
</evidence>
<gene>
    <name evidence="1" type="primary">lpxD</name>
    <name type="ordered locus">BPEN_289</name>
</gene>
<comment type="function">
    <text evidence="1">Catalyzes the N-acylation of UDP-3-O-(hydroxytetradecanoyl)glucosamine using 3-hydroxytetradecanoyl-ACP as the acyl donor. Is involved in the biosynthesis of lipid A, a phosphorylated glycolipid that anchors the lipopolysaccharide to the outer membrane of the cell.</text>
</comment>
<comment type="catalytic activity">
    <reaction evidence="1">
        <text>a UDP-3-O-[(3R)-3-hydroxyacyl]-alpha-D-glucosamine + a (3R)-hydroxyacyl-[ACP] = a UDP-2-N,3-O-bis[(3R)-3-hydroxyacyl]-alpha-D-glucosamine + holo-[ACP] + H(+)</text>
        <dbReference type="Rhea" id="RHEA:53836"/>
        <dbReference type="Rhea" id="RHEA-COMP:9685"/>
        <dbReference type="Rhea" id="RHEA-COMP:9945"/>
        <dbReference type="ChEBI" id="CHEBI:15378"/>
        <dbReference type="ChEBI" id="CHEBI:64479"/>
        <dbReference type="ChEBI" id="CHEBI:78827"/>
        <dbReference type="ChEBI" id="CHEBI:137740"/>
        <dbReference type="ChEBI" id="CHEBI:137748"/>
        <dbReference type="EC" id="2.3.1.191"/>
    </reaction>
</comment>
<comment type="catalytic activity">
    <reaction evidence="1">
        <text>UDP-3-O-[(3R)-3-hydroxytetradecanoyl]-alpha-D-glucosamine + (3R)-hydroxytetradecanoyl-[ACP] = UDP-2-N,3-O-bis[(3R)-3-hydroxytetradecanoyl]-alpha-D-glucosamine + holo-[ACP] + H(+)</text>
        <dbReference type="Rhea" id="RHEA:17817"/>
        <dbReference type="Rhea" id="RHEA-COMP:9646"/>
        <dbReference type="Rhea" id="RHEA-COMP:9685"/>
        <dbReference type="ChEBI" id="CHEBI:15378"/>
        <dbReference type="ChEBI" id="CHEBI:64479"/>
        <dbReference type="ChEBI" id="CHEBI:71573"/>
        <dbReference type="ChEBI" id="CHEBI:78474"/>
        <dbReference type="ChEBI" id="CHEBI:78847"/>
    </reaction>
</comment>
<comment type="pathway">
    <text evidence="1">Glycolipid biosynthesis; lipid IV(A) biosynthesis; lipid IV(A) from (3R)-3-hydroxytetradecanoyl-[acyl-carrier-protein] and UDP-N-acetyl-alpha-D-glucosamine: step 3/6.</text>
</comment>
<comment type="subunit">
    <text evidence="1">Homotrimer.</text>
</comment>
<comment type="similarity">
    <text evidence="1">Belongs to the transferase hexapeptide repeat family. LpxD subfamily.</text>
</comment>
<reference key="1">
    <citation type="journal article" date="2005" name="Genome Res.">
        <title>Genome sequence of Blochmannia pennsylvanicus indicates parallel evolutionary trends among bacterial mutualists of insects.</title>
        <authorList>
            <person name="Degnan P.H."/>
            <person name="Lazarus A.B."/>
            <person name="Wernegreen J.J."/>
        </authorList>
    </citation>
    <scope>NUCLEOTIDE SEQUENCE [LARGE SCALE GENOMIC DNA]</scope>
    <source>
        <strain>BPEN</strain>
    </source>
</reference>
<feature type="chain" id="PRO_0000264348" description="UDP-3-O-(3-hydroxymyristoyl)glucosamine N-acyltransferase">
    <location>
        <begin position="1"/>
        <end position="343"/>
    </location>
</feature>
<feature type="active site" description="Proton acceptor" evidence="1">
    <location>
        <position position="239"/>
    </location>
</feature>
<organism>
    <name type="scientific">Blochmanniella pennsylvanica (strain BPEN)</name>
    <dbReference type="NCBI Taxonomy" id="291272"/>
    <lineage>
        <taxon>Bacteria</taxon>
        <taxon>Pseudomonadati</taxon>
        <taxon>Pseudomonadota</taxon>
        <taxon>Gammaproteobacteria</taxon>
        <taxon>Enterobacterales</taxon>
        <taxon>Enterobacteriaceae</taxon>
        <taxon>ant endosymbionts</taxon>
        <taxon>Candidatus Blochmanniella</taxon>
    </lineage>
</organism>
<name>LPXD_BLOPB</name>
<accession>Q493C2</accession>
<sequence length="343" mass="36655">MIEMRLSDLAQQLNAKLHGDENIIITGVASINNAQVGHITFLKDQRFLSQLSSCRASAVILSKNNLIFCKIAALVVEDPYIAYVKIARLMDTTPKPSKNIASGAIIASDAILGQRVGIGANAVIESEVILGDDVIIGPGSFVGKKTRIGTGTRLWANVTIYHEVEIGECCLIQSGAIIGSDGFGYINDHGVWIKIPHLGTVKIGNNVEIGACTTIDRGTLDDTKIENGVIIDNQCQIAHNVIIGARTAIAGGVIMAGSLTIGRDCMIGGASVINGHINICDKVTITGMGMVIKAITQPGIYSSGIPVQLNTVWWKTAALIMRISNMNKRIKTIEEKLKKLLFL</sequence>
<protein>
    <recommendedName>
        <fullName evidence="1">UDP-3-O-(3-hydroxymyristoyl)glucosamine N-acyltransferase</fullName>
        <shortName evidence="1">UDP-3-O-(3-OHC14)-GlcN N-acyltransferase</shortName>
        <ecNumber evidence="1">2.3.1.191</ecNumber>
    </recommendedName>
    <alternativeName>
        <fullName evidence="1">UDP-3-O-(3-hydroxytetradecanoyl)glucosamine N-acyltransferase</fullName>
    </alternativeName>
</protein>
<dbReference type="EC" id="2.3.1.191" evidence="1"/>
<dbReference type="EMBL" id="CP000016">
    <property type="protein sequence ID" value="AAZ40920.1"/>
    <property type="molecule type" value="Genomic_DNA"/>
</dbReference>
<dbReference type="RefSeq" id="WP_011282827.1">
    <property type="nucleotide sequence ID" value="NC_007292.1"/>
</dbReference>
<dbReference type="SMR" id="Q493C2"/>
<dbReference type="STRING" id="291272.BPEN_289"/>
<dbReference type="KEGG" id="bpn:BPEN_289"/>
<dbReference type="eggNOG" id="COG1044">
    <property type="taxonomic scope" value="Bacteria"/>
</dbReference>
<dbReference type="HOGENOM" id="CLU_049865_0_1_6"/>
<dbReference type="OrthoDB" id="9784739at2"/>
<dbReference type="UniPathway" id="UPA00359">
    <property type="reaction ID" value="UER00479"/>
</dbReference>
<dbReference type="Proteomes" id="UP000007794">
    <property type="component" value="Chromosome"/>
</dbReference>
<dbReference type="GO" id="GO:0016020">
    <property type="term" value="C:membrane"/>
    <property type="evidence" value="ECO:0007669"/>
    <property type="project" value="GOC"/>
</dbReference>
<dbReference type="GO" id="GO:0016410">
    <property type="term" value="F:N-acyltransferase activity"/>
    <property type="evidence" value="ECO:0007669"/>
    <property type="project" value="InterPro"/>
</dbReference>
<dbReference type="GO" id="GO:0103118">
    <property type="term" value="F:UDP-3-O-(R-3-hydroxymyristoyl)-glucosamine N-acyltransferase activity"/>
    <property type="evidence" value="ECO:0007669"/>
    <property type="project" value="UniProtKB-EC"/>
</dbReference>
<dbReference type="GO" id="GO:0009245">
    <property type="term" value="P:lipid A biosynthetic process"/>
    <property type="evidence" value="ECO:0007669"/>
    <property type="project" value="UniProtKB-UniRule"/>
</dbReference>
<dbReference type="CDD" id="cd03352">
    <property type="entry name" value="LbH_LpxD"/>
    <property type="match status" value="1"/>
</dbReference>
<dbReference type="FunFam" id="2.160.10.10:FF:000005">
    <property type="entry name" value="UDP-3-O-(3-hydroxymyristoyl)glucosamine N-acyltransferase"/>
    <property type="match status" value="1"/>
</dbReference>
<dbReference type="Gene3D" id="1.20.5.170">
    <property type="match status" value="1"/>
</dbReference>
<dbReference type="Gene3D" id="2.160.10.10">
    <property type="entry name" value="Hexapeptide repeat proteins"/>
    <property type="match status" value="1"/>
</dbReference>
<dbReference type="Gene3D" id="3.40.1390.10">
    <property type="entry name" value="MurE/MurF, N-terminal domain"/>
    <property type="match status" value="1"/>
</dbReference>
<dbReference type="HAMAP" id="MF_00523">
    <property type="entry name" value="LpxD"/>
    <property type="match status" value="1"/>
</dbReference>
<dbReference type="InterPro" id="IPR001451">
    <property type="entry name" value="Hexapep"/>
</dbReference>
<dbReference type="InterPro" id="IPR018357">
    <property type="entry name" value="Hexapep_transf_CS"/>
</dbReference>
<dbReference type="InterPro" id="IPR007691">
    <property type="entry name" value="LpxD"/>
</dbReference>
<dbReference type="InterPro" id="IPR011004">
    <property type="entry name" value="Trimer_LpxA-like_sf"/>
</dbReference>
<dbReference type="InterPro" id="IPR020573">
    <property type="entry name" value="UDP_GlcNAc_AcTrfase_non-rep"/>
</dbReference>
<dbReference type="NCBIfam" id="TIGR01853">
    <property type="entry name" value="lipid_A_lpxD"/>
    <property type="match status" value="1"/>
</dbReference>
<dbReference type="NCBIfam" id="NF002060">
    <property type="entry name" value="PRK00892.1"/>
    <property type="match status" value="1"/>
</dbReference>
<dbReference type="PANTHER" id="PTHR43378">
    <property type="entry name" value="UDP-3-O-ACYLGLUCOSAMINE N-ACYLTRANSFERASE"/>
    <property type="match status" value="1"/>
</dbReference>
<dbReference type="PANTHER" id="PTHR43378:SF2">
    <property type="entry name" value="UDP-3-O-ACYLGLUCOSAMINE N-ACYLTRANSFERASE 1, MITOCHONDRIAL-RELATED"/>
    <property type="match status" value="1"/>
</dbReference>
<dbReference type="Pfam" id="PF00132">
    <property type="entry name" value="Hexapep"/>
    <property type="match status" value="3"/>
</dbReference>
<dbReference type="Pfam" id="PF14602">
    <property type="entry name" value="Hexapep_2"/>
    <property type="match status" value="1"/>
</dbReference>
<dbReference type="Pfam" id="PF04613">
    <property type="entry name" value="LpxD"/>
    <property type="match status" value="1"/>
</dbReference>
<dbReference type="SUPFAM" id="SSF51161">
    <property type="entry name" value="Trimeric LpxA-like enzymes"/>
    <property type="match status" value="1"/>
</dbReference>
<dbReference type="PROSITE" id="PS00101">
    <property type="entry name" value="HEXAPEP_TRANSFERASES"/>
    <property type="match status" value="3"/>
</dbReference>
<keyword id="KW-0012">Acyltransferase</keyword>
<keyword id="KW-0441">Lipid A biosynthesis</keyword>
<keyword id="KW-0444">Lipid biosynthesis</keyword>
<keyword id="KW-0443">Lipid metabolism</keyword>
<keyword id="KW-1185">Reference proteome</keyword>
<keyword id="KW-0677">Repeat</keyword>
<keyword id="KW-0808">Transferase</keyword>